<accession>Q8E0C6</accession>
<feature type="signal peptide" evidence="1">
    <location>
        <begin position="1"/>
        <end position="22"/>
    </location>
</feature>
<feature type="chain" id="PRO_0000029325" description="Foldase protein PrsA">
    <location>
        <begin position="23"/>
        <end position="309"/>
    </location>
</feature>
<feature type="domain" description="PpiC" evidence="1">
    <location>
        <begin position="146"/>
        <end position="241"/>
    </location>
</feature>
<feature type="lipid moiety-binding region" description="N-palmitoyl cysteine" evidence="1">
    <location>
        <position position="23"/>
    </location>
</feature>
<feature type="lipid moiety-binding region" description="S-diacylglycerol cysteine" evidence="1">
    <location>
        <position position="23"/>
    </location>
</feature>
<reference key="1">
    <citation type="journal article" date="2002" name="Proc. Natl. Acad. Sci. U.S.A.">
        <title>Complete genome sequence and comparative genomic analysis of an emerging human pathogen, serotype V Streptococcus agalactiae.</title>
        <authorList>
            <person name="Tettelin H."/>
            <person name="Masignani V."/>
            <person name="Cieslewicz M.J."/>
            <person name="Eisen J.A."/>
            <person name="Peterson S.N."/>
            <person name="Wessels M.R."/>
            <person name="Paulsen I.T."/>
            <person name="Nelson K.E."/>
            <person name="Margarit I."/>
            <person name="Read T.D."/>
            <person name="Madoff L.C."/>
            <person name="Wolf A.M."/>
            <person name="Beanan M.J."/>
            <person name="Brinkac L.M."/>
            <person name="Daugherty S.C."/>
            <person name="DeBoy R.T."/>
            <person name="Durkin A.S."/>
            <person name="Kolonay J.F."/>
            <person name="Madupu R."/>
            <person name="Lewis M.R."/>
            <person name="Radune D."/>
            <person name="Fedorova N.B."/>
            <person name="Scanlan D."/>
            <person name="Khouri H.M."/>
            <person name="Mulligan S."/>
            <person name="Carty H.A."/>
            <person name="Cline R.T."/>
            <person name="Van Aken S.E."/>
            <person name="Gill J."/>
            <person name="Scarselli M."/>
            <person name="Mora M."/>
            <person name="Iacobini E.T."/>
            <person name="Brettoni C."/>
            <person name="Galli G."/>
            <person name="Mariani M."/>
            <person name="Vegni F."/>
            <person name="Maione D."/>
            <person name="Rinaudo D."/>
            <person name="Rappuoli R."/>
            <person name="Telford J.L."/>
            <person name="Kasper D.L."/>
            <person name="Grandi G."/>
            <person name="Fraser C.M."/>
        </authorList>
    </citation>
    <scope>NUCLEOTIDE SEQUENCE [LARGE SCALE GENOMIC DNA]</scope>
    <source>
        <strain>ATCC BAA-611 / 2603 V/R</strain>
    </source>
</reference>
<dbReference type="EC" id="5.2.1.8" evidence="1"/>
<dbReference type="EMBL" id="AE009948">
    <property type="protein sequence ID" value="AAM99695.1"/>
    <property type="molecule type" value="Genomic_DNA"/>
</dbReference>
<dbReference type="RefSeq" id="NP_687823.1">
    <property type="nucleotide sequence ID" value="NC_004116.1"/>
</dbReference>
<dbReference type="RefSeq" id="WP_000857822.1">
    <property type="nucleotide sequence ID" value="NC_004116.1"/>
</dbReference>
<dbReference type="SMR" id="Q8E0C6"/>
<dbReference type="STRING" id="208435.SAG0808"/>
<dbReference type="KEGG" id="sag:SAG0808"/>
<dbReference type="PATRIC" id="fig|208435.3.peg.814"/>
<dbReference type="HOGENOM" id="CLU_034646_6_0_9"/>
<dbReference type="OrthoDB" id="2194386at2"/>
<dbReference type="Proteomes" id="UP000000821">
    <property type="component" value="Chromosome"/>
</dbReference>
<dbReference type="GO" id="GO:0005886">
    <property type="term" value="C:plasma membrane"/>
    <property type="evidence" value="ECO:0007669"/>
    <property type="project" value="UniProtKB-SubCell"/>
</dbReference>
<dbReference type="GO" id="GO:0003755">
    <property type="term" value="F:peptidyl-prolyl cis-trans isomerase activity"/>
    <property type="evidence" value="ECO:0007669"/>
    <property type="project" value="UniProtKB-UniRule"/>
</dbReference>
<dbReference type="GO" id="GO:0006457">
    <property type="term" value="P:protein folding"/>
    <property type="evidence" value="ECO:0007669"/>
    <property type="project" value="UniProtKB-UniRule"/>
</dbReference>
<dbReference type="Gene3D" id="3.10.50.40">
    <property type="match status" value="1"/>
</dbReference>
<dbReference type="HAMAP" id="MF_01145">
    <property type="entry name" value="Foldase_PrsA"/>
    <property type="match status" value="1"/>
</dbReference>
<dbReference type="InterPro" id="IPR023059">
    <property type="entry name" value="Foldase_PrsA"/>
</dbReference>
<dbReference type="InterPro" id="IPR046357">
    <property type="entry name" value="PPIase_dom_sf"/>
</dbReference>
<dbReference type="InterPro" id="IPR000297">
    <property type="entry name" value="PPIase_PpiC"/>
</dbReference>
<dbReference type="InterPro" id="IPR050245">
    <property type="entry name" value="PrsA_foldase"/>
</dbReference>
<dbReference type="InterPro" id="IPR027304">
    <property type="entry name" value="Trigger_fact/SurA_dom_sf"/>
</dbReference>
<dbReference type="NCBIfam" id="NF002361">
    <property type="entry name" value="PRK01326.1"/>
    <property type="match status" value="1"/>
</dbReference>
<dbReference type="PANTHER" id="PTHR47245:SF1">
    <property type="entry name" value="FOLDASE PROTEIN PRSA"/>
    <property type="match status" value="1"/>
</dbReference>
<dbReference type="PANTHER" id="PTHR47245">
    <property type="entry name" value="PEPTIDYLPROLYL ISOMERASE"/>
    <property type="match status" value="1"/>
</dbReference>
<dbReference type="Pfam" id="PF13145">
    <property type="entry name" value="Rotamase_2"/>
    <property type="match status" value="1"/>
</dbReference>
<dbReference type="SUPFAM" id="SSF54534">
    <property type="entry name" value="FKBP-like"/>
    <property type="match status" value="1"/>
</dbReference>
<dbReference type="SUPFAM" id="SSF109998">
    <property type="entry name" value="Triger factor/SurA peptide-binding domain-like"/>
    <property type="match status" value="1"/>
</dbReference>
<dbReference type="PROSITE" id="PS50198">
    <property type="entry name" value="PPIC_PPIASE_2"/>
    <property type="match status" value="1"/>
</dbReference>
<dbReference type="PROSITE" id="PS51257">
    <property type="entry name" value="PROKAR_LIPOPROTEIN"/>
    <property type="match status" value="1"/>
</dbReference>
<keyword id="KW-1003">Cell membrane</keyword>
<keyword id="KW-0413">Isomerase</keyword>
<keyword id="KW-0449">Lipoprotein</keyword>
<keyword id="KW-0472">Membrane</keyword>
<keyword id="KW-0564">Palmitate</keyword>
<keyword id="KW-1185">Reference proteome</keyword>
<keyword id="KW-0697">Rotamase</keyword>
<keyword id="KW-0732">Signal</keyword>
<name>PRSA_STRA5</name>
<proteinExistence type="inferred from homology"/>
<organism>
    <name type="scientific">Streptococcus agalactiae serotype V (strain ATCC BAA-611 / 2603 V/R)</name>
    <dbReference type="NCBI Taxonomy" id="208435"/>
    <lineage>
        <taxon>Bacteria</taxon>
        <taxon>Bacillati</taxon>
        <taxon>Bacillota</taxon>
        <taxon>Bacilli</taxon>
        <taxon>Lactobacillales</taxon>
        <taxon>Streptococcaceae</taxon>
        <taxon>Streptococcus</taxon>
    </lineage>
</organism>
<protein>
    <recommendedName>
        <fullName evidence="1">Foldase protein PrsA</fullName>
        <ecNumber evidence="1">5.2.1.8</ecNumber>
    </recommendedName>
</protein>
<comment type="function">
    <text evidence="1">Plays a major role in protein secretion by helping the post-translocational extracellular folding of several secreted proteins.</text>
</comment>
<comment type="catalytic activity">
    <reaction evidence="1">
        <text>[protein]-peptidylproline (omega=180) = [protein]-peptidylproline (omega=0)</text>
        <dbReference type="Rhea" id="RHEA:16237"/>
        <dbReference type="Rhea" id="RHEA-COMP:10747"/>
        <dbReference type="Rhea" id="RHEA-COMP:10748"/>
        <dbReference type="ChEBI" id="CHEBI:83833"/>
        <dbReference type="ChEBI" id="CHEBI:83834"/>
        <dbReference type="EC" id="5.2.1.8"/>
    </reaction>
</comment>
<comment type="subcellular location">
    <subcellularLocation>
        <location evidence="1">Cell membrane</location>
        <topology evidence="1">Lipid-anchor</topology>
    </subcellularLocation>
</comment>
<comment type="similarity">
    <text evidence="1">Belongs to the PrsA family.</text>
</comment>
<gene>
    <name evidence="1" type="primary">prsA</name>
    <name type="ordered locus">SAG0808</name>
</gene>
<evidence type="ECO:0000255" key="1">
    <source>
        <dbReference type="HAMAP-Rule" id="MF_01145"/>
    </source>
</evidence>
<sequence length="309" mass="33891">MKTRSKLAAGFLTLMSVATLAACSGKTSNGTNVVTMKGDTITVSDFYDQVKTSKAAQQSMLTLILSRVFDTQYGDKVSDKKVSEAYNKTAKGYGNSFSSALSQAGLTPEGYKQQIRTTMLVEYAVKEAAKKELTEANYKEAYKNYTPETSVQVIKLDAEDKAKSVLKDVKADGADFAKIAKEKTTATDKKVEYKFDSAGTTLPKEVMSAAFKLDKNGVSDVVSTVDSTTYKTSYYIIKVTDKTEKKSDWKSYKNRLKEVILKDKTSDRAFQNKVISKALEKANVKIKDKAFAGILSQYATTSGSSSLKK</sequence>